<evidence type="ECO:0000255" key="1">
    <source>
        <dbReference type="HAMAP-Rule" id="MF_01347"/>
    </source>
</evidence>
<comment type="function">
    <text evidence="1">Produces ATP from ADP in the presence of a proton gradient across the membrane. The catalytic sites are hosted primarily by the beta subunits.</text>
</comment>
<comment type="catalytic activity">
    <reaction evidence="1">
        <text>ATP + H2O + 4 H(+)(in) = ADP + phosphate + 5 H(+)(out)</text>
        <dbReference type="Rhea" id="RHEA:57720"/>
        <dbReference type="ChEBI" id="CHEBI:15377"/>
        <dbReference type="ChEBI" id="CHEBI:15378"/>
        <dbReference type="ChEBI" id="CHEBI:30616"/>
        <dbReference type="ChEBI" id="CHEBI:43474"/>
        <dbReference type="ChEBI" id="CHEBI:456216"/>
        <dbReference type="EC" id="7.1.2.2"/>
    </reaction>
</comment>
<comment type="subunit">
    <text evidence="1">F-type ATPases have 2 components, CF(1) - the catalytic core - and CF(0) - the membrane proton channel. CF(1) has five subunits: alpha(3), beta(3), gamma(1), delta(1), epsilon(1). CF(0) has three main subunits: a(1), b(2) and c(9-12). The alpha and beta chains form an alternating ring which encloses part of the gamma chain. CF(1) is attached to CF(0) by a central stalk formed by the gamma and epsilon chains, while a peripheral stalk is formed by the delta and b chains.</text>
</comment>
<comment type="subcellular location">
    <subcellularLocation>
        <location evidence="1">Cell membrane</location>
        <topology evidence="1">Peripheral membrane protein</topology>
    </subcellularLocation>
</comment>
<comment type="similarity">
    <text evidence="1">Belongs to the ATPase alpha/beta chains family.</text>
</comment>
<reference key="1">
    <citation type="journal article" date="2009" name="Appl. Environ. Microbiol.">
        <title>Genome analysis of the meat starter culture bacterium Staphylococcus carnosus TM300.</title>
        <authorList>
            <person name="Rosenstein R."/>
            <person name="Nerz C."/>
            <person name="Biswas L."/>
            <person name="Resch A."/>
            <person name="Raddatz G."/>
            <person name="Schuster S.C."/>
            <person name="Goetz F."/>
        </authorList>
    </citation>
    <scope>NUCLEOTIDE SEQUENCE [LARGE SCALE GENOMIC DNA]</scope>
    <source>
        <strain>TM300</strain>
    </source>
</reference>
<organism>
    <name type="scientific">Staphylococcus carnosus (strain TM300)</name>
    <dbReference type="NCBI Taxonomy" id="396513"/>
    <lineage>
        <taxon>Bacteria</taxon>
        <taxon>Bacillati</taxon>
        <taxon>Bacillota</taxon>
        <taxon>Bacilli</taxon>
        <taxon>Bacillales</taxon>
        <taxon>Staphylococcaceae</taxon>
        <taxon>Staphylococcus</taxon>
    </lineage>
</organism>
<feature type="chain" id="PRO_1000166604" description="ATP synthase subunit beta">
    <location>
        <begin position="1"/>
        <end position="471"/>
    </location>
</feature>
<feature type="binding site" evidence="1">
    <location>
        <begin position="156"/>
        <end position="163"/>
    </location>
    <ligand>
        <name>ATP</name>
        <dbReference type="ChEBI" id="CHEBI:30616"/>
    </ligand>
</feature>
<accession>B9DME3</accession>
<protein>
    <recommendedName>
        <fullName evidence="1">ATP synthase subunit beta</fullName>
        <ecNumber evidence="1">7.1.2.2</ecNumber>
    </recommendedName>
    <alternativeName>
        <fullName evidence="1">ATP synthase F1 sector subunit beta</fullName>
    </alternativeName>
    <alternativeName>
        <fullName evidence="1">F-ATPase subunit beta</fullName>
    </alternativeName>
</protein>
<name>ATPB_STACT</name>
<gene>
    <name evidence="1" type="primary">atpD</name>
    <name type="ordered locus">Sca_1606</name>
</gene>
<dbReference type="EC" id="7.1.2.2" evidence="1"/>
<dbReference type="EMBL" id="AM295250">
    <property type="protein sequence ID" value="CAL28512.1"/>
    <property type="molecule type" value="Genomic_DNA"/>
</dbReference>
<dbReference type="RefSeq" id="WP_015900852.1">
    <property type="nucleotide sequence ID" value="NC_012121.1"/>
</dbReference>
<dbReference type="SMR" id="B9DME3"/>
<dbReference type="GeneID" id="93794060"/>
<dbReference type="KEGG" id="sca:SCA_1606"/>
<dbReference type="eggNOG" id="COG0055">
    <property type="taxonomic scope" value="Bacteria"/>
</dbReference>
<dbReference type="HOGENOM" id="CLU_022398_0_2_9"/>
<dbReference type="OrthoDB" id="9801639at2"/>
<dbReference type="BioCyc" id="SCAR396513:SCA_RS08160-MONOMER"/>
<dbReference type="Proteomes" id="UP000000444">
    <property type="component" value="Chromosome"/>
</dbReference>
<dbReference type="GO" id="GO:0005886">
    <property type="term" value="C:plasma membrane"/>
    <property type="evidence" value="ECO:0007669"/>
    <property type="project" value="UniProtKB-SubCell"/>
</dbReference>
<dbReference type="GO" id="GO:0045259">
    <property type="term" value="C:proton-transporting ATP synthase complex"/>
    <property type="evidence" value="ECO:0007669"/>
    <property type="project" value="UniProtKB-KW"/>
</dbReference>
<dbReference type="GO" id="GO:0005524">
    <property type="term" value="F:ATP binding"/>
    <property type="evidence" value="ECO:0007669"/>
    <property type="project" value="UniProtKB-UniRule"/>
</dbReference>
<dbReference type="GO" id="GO:0016887">
    <property type="term" value="F:ATP hydrolysis activity"/>
    <property type="evidence" value="ECO:0007669"/>
    <property type="project" value="InterPro"/>
</dbReference>
<dbReference type="GO" id="GO:0046933">
    <property type="term" value="F:proton-transporting ATP synthase activity, rotational mechanism"/>
    <property type="evidence" value="ECO:0007669"/>
    <property type="project" value="UniProtKB-UniRule"/>
</dbReference>
<dbReference type="CDD" id="cd18110">
    <property type="entry name" value="ATP-synt_F1_beta_C"/>
    <property type="match status" value="1"/>
</dbReference>
<dbReference type="CDD" id="cd18115">
    <property type="entry name" value="ATP-synt_F1_beta_N"/>
    <property type="match status" value="1"/>
</dbReference>
<dbReference type="CDD" id="cd01133">
    <property type="entry name" value="F1-ATPase_beta_CD"/>
    <property type="match status" value="1"/>
</dbReference>
<dbReference type="FunFam" id="1.10.1140.10:FF:000001">
    <property type="entry name" value="ATP synthase subunit beta"/>
    <property type="match status" value="1"/>
</dbReference>
<dbReference type="FunFam" id="2.40.10.170:FF:000005">
    <property type="entry name" value="ATP synthase subunit beta"/>
    <property type="match status" value="1"/>
</dbReference>
<dbReference type="FunFam" id="3.40.50.300:FF:000004">
    <property type="entry name" value="ATP synthase subunit beta"/>
    <property type="match status" value="1"/>
</dbReference>
<dbReference type="Gene3D" id="2.40.10.170">
    <property type="match status" value="1"/>
</dbReference>
<dbReference type="Gene3D" id="1.10.1140.10">
    <property type="entry name" value="Bovine Mitochondrial F1-atpase, Atp Synthase Beta Chain, Chain D, domain 3"/>
    <property type="match status" value="1"/>
</dbReference>
<dbReference type="Gene3D" id="3.40.50.300">
    <property type="entry name" value="P-loop containing nucleotide triphosphate hydrolases"/>
    <property type="match status" value="1"/>
</dbReference>
<dbReference type="HAMAP" id="MF_01347">
    <property type="entry name" value="ATP_synth_beta_bact"/>
    <property type="match status" value="1"/>
</dbReference>
<dbReference type="InterPro" id="IPR003593">
    <property type="entry name" value="AAA+_ATPase"/>
</dbReference>
<dbReference type="InterPro" id="IPR055190">
    <property type="entry name" value="ATP-synt_VA_C"/>
</dbReference>
<dbReference type="InterPro" id="IPR005722">
    <property type="entry name" value="ATP_synth_F1_bsu"/>
</dbReference>
<dbReference type="InterPro" id="IPR020003">
    <property type="entry name" value="ATPase_a/bsu_AS"/>
</dbReference>
<dbReference type="InterPro" id="IPR050053">
    <property type="entry name" value="ATPase_alpha/beta_chains"/>
</dbReference>
<dbReference type="InterPro" id="IPR004100">
    <property type="entry name" value="ATPase_F1/V1/A1_a/bsu_N"/>
</dbReference>
<dbReference type="InterPro" id="IPR036121">
    <property type="entry name" value="ATPase_F1/V1/A1_a/bsu_N_sf"/>
</dbReference>
<dbReference type="InterPro" id="IPR000194">
    <property type="entry name" value="ATPase_F1/V1/A1_a/bsu_nucl-bd"/>
</dbReference>
<dbReference type="InterPro" id="IPR024034">
    <property type="entry name" value="ATPase_F1/V1_b/a_C"/>
</dbReference>
<dbReference type="InterPro" id="IPR027417">
    <property type="entry name" value="P-loop_NTPase"/>
</dbReference>
<dbReference type="NCBIfam" id="TIGR01039">
    <property type="entry name" value="atpD"/>
    <property type="match status" value="1"/>
</dbReference>
<dbReference type="PANTHER" id="PTHR15184">
    <property type="entry name" value="ATP SYNTHASE"/>
    <property type="match status" value="1"/>
</dbReference>
<dbReference type="PANTHER" id="PTHR15184:SF71">
    <property type="entry name" value="ATP SYNTHASE SUBUNIT BETA, MITOCHONDRIAL"/>
    <property type="match status" value="1"/>
</dbReference>
<dbReference type="Pfam" id="PF00006">
    <property type="entry name" value="ATP-synt_ab"/>
    <property type="match status" value="1"/>
</dbReference>
<dbReference type="Pfam" id="PF02874">
    <property type="entry name" value="ATP-synt_ab_N"/>
    <property type="match status" value="1"/>
</dbReference>
<dbReference type="Pfam" id="PF22919">
    <property type="entry name" value="ATP-synt_VA_C"/>
    <property type="match status" value="1"/>
</dbReference>
<dbReference type="SMART" id="SM00382">
    <property type="entry name" value="AAA"/>
    <property type="match status" value="1"/>
</dbReference>
<dbReference type="SUPFAM" id="SSF47917">
    <property type="entry name" value="C-terminal domain of alpha and beta subunits of F1 ATP synthase"/>
    <property type="match status" value="1"/>
</dbReference>
<dbReference type="SUPFAM" id="SSF50615">
    <property type="entry name" value="N-terminal domain of alpha and beta subunits of F1 ATP synthase"/>
    <property type="match status" value="1"/>
</dbReference>
<dbReference type="SUPFAM" id="SSF52540">
    <property type="entry name" value="P-loop containing nucleoside triphosphate hydrolases"/>
    <property type="match status" value="1"/>
</dbReference>
<dbReference type="PROSITE" id="PS00152">
    <property type="entry name" value="ATPASE_ALPHA_BETA"/>
    <property type="match status" value="1"/>
</dbReference>
<keyword id="KW-0066">ATP synthesis</keyword>
<keyword id="KW-0067">ATP-binding</keyword>
<keyword id="KW-1003">Cell membrane</keyword>
<keyword id="KW-0139">CF(1)</keyword>
<keyword id="KW-0375">Hydrogen ion transport</keyword>
<keyword id="KW-0406">Ion transport</keyword>
<keyword id="KW-0472">Membrane</keyword>
<keyword id="KW-0547">Nucleotide-binding</keyword>
<keyword id="KW-1185">Reference proteome</keyword>
<keyword id="KW-1278">Translocase</keyword>
<keyword id="KW-0813">Transport</keyword>
<sequence length="471" mass="51441">MGVGRVTQIMGPVIDVRFNHDELPKINNALVLDVPKKDGTTESLTLEVALELGDDVVRTIAMDSTDGIKRGDDVKDTGRPISVPVGDDTLGRVFNVLGDPIDNAGPIPESVPREPIHRQPPPFDELSTKVEILETGIKVVDLLAPYIKGGKVGLFGGAGVGKTVLIQELINNIAQEHGGISVFAGVGERTREGNDLYFEMSDSGVIKKTAMVFGQMNEPPGARMRVALSGLTMAEYFRDVKGQDVLLFIDNIFRFTQAGSEVSALLGRMPSAVGYQPTLATEMGQLQERITSTMKGSITSIQAVFVPADDYTDPAPATAFAHLDATTNLERKLTEMGIYPAVDPLASTSRALEPSIVGQEHYDVARRVQATLQKYRELQDIIAILGMDELSDEDKSTVERARRIQFFLSQNFHVAEQFTGQKGSYVSVKRTVEDFKDILEGKYDHIPEDAFRLVGSMDDVLEKAKDMGVEV</sequence>
<proteinExistence type="inferred from homology"/>